<dbReference type="EMBL" id="AY204899">
    <property type="protein sequence ID" value="AAO46998.1"/>
    <property type="molecule type" value="mRNA"/>
</dbReference>
<dbReference type="EMBL" id="BC102766">
    <property type="protein sequence ID" value="AAI02767.1"/>
    <property type="molecule type" value="mRNA"/>
</dbReference>
<dbReference type="RefSeq" id="NP_001178190.1">
    <property type="nucleotide sequence ID" value="NM_001191261.2"/>
</dbReference>
<dbReference type="SMR" id="Q3SZP0"/>
<dbReference type="FunCoup" id="Q3SZP0">
    <property type="interactions" value="955"/>
</dbReference>
<dbReference type="STRING" id="9913.ENSBTAP00000041732"/>
<dbReference type="PaxDb" id="9913-ENSBTAP00000041732"/>
<dbReference type="GeneID" id="789216"/>
<dbReference type="KEGG" id="bta:789216"/>
<dbReference type="CTD" id="3659"/>
<dbReference type="eggNOG" id="ENOG502QVVN">
    <property type="taxonomic scope" value="Eukaryota"/>
</dbReference>
<dbReference type="HOGENOM" id="CLU_056386_1_0_1"/>
<dbReference type="InParanoid" id="Q3SZP0"/>
<dbReference type="OrthoDB" id="6538197at2759"/>
<dbReference type="TreeFam" id="TF328512"/>
<dbReference type="Proteomes" id="UP000009136">
    <property type="component" value="Unplaced"/>
</dbReference>
<dbReference type="GO" id="GO:0005737">
    <property type="term" value="C:cytoplasm"/>
    <property type="evidence" value="ECO:0000250"/>
    <property type="project" value="UniProtKB"/>
</dbReference>
<dbReference type="GO" id="GO:0005634">
    <property type="term" value="C:nucleus"/>
    <property type="evidence" value="ECO:0000250"/>
    <property type="project" value="UniProtKB"/>
</dbReference>
<dbReference type="GO" id="GO:0000981">
    <property type="term" value="F:DNA-binding transcription factor activity, RNA polymerase II-specific"/>
    <property type="evidence" value="ECO:0000250"/>
    <property type="project" value="UniProtKB"/>
</dbReference>
<dbReference type="GO" id="GO:0000978">
    <property type="term" value="F:RNA polymerase II cis-regulatory region sequence-specific DNA binding"/>
    <property type="evidence" value="ECO:0000318"/>
    <property type="project" value="GO_Central"/>
</dbReference>
<dbReference type="GO" id="GO:0000976">
    <property type="term" value="F:transcription cis-regulatory region binding"/>
    <property type="evidence" value="ECO:0000250"/>
    <property type="project" value="UniProtKB"/>
</dbReference>
<dbReference type="GO" id="GO:0006915">
    <property type="term" value="P:apoptotic process"/>
    <property type="evidence" value="ECO:0000250"/>
    <property type="project" value="UniProtKB"/>
</dbReference>
<dbReference type="GO" id="GO:0051607">
    <property type="term" value="P:defense response to virus"/>
    <property type="evidence" value="ECO:0000250"/>
    <property type="project" value="UniProtKB"/>
</dbReference>
<dbReference type="GO" id="GO:0002376">
    <property type="term" value="P:immune system process"/>
    <property type="evidence" value="ECO:0000318"/>
    <property type="project" value="GO_Central"/>
</dbReference>
<dbReference type="GO" id="GO:0045892">
    <property type="term" value="P:negative regulation of DNA-templated transcription"/>
    <property type="evidence" value="ECO:0000250"/>
    <property type="project" value="UniProtKB"/>
</dbReference>
<dbReference type="GO" id="GO:0045590">
    <property type="term" value="P:negative regulation of regulatory T cell differentiation"/>
    <property type="evidence" value="ECO:0000250"/>
    <property type="project" value="UniProtKB"/>
</dbReference>
<dbReference type="GO" id="GO:0045893">
    <property type="term" value="P:positive regulation of DNA-templated transcription"/>
    <property type="evidence" value="ECO:0000250"/>
    <property type="project" value="UniProtKB"/>
</dbReference>
<dbReference type="GO" id="GO:0032728">
    <property type="term" value="P:positive regulation of interferon-beta production"/>
    <property type="evidence" value="ECO:0000250"/>
    <property type="project" value="UniProtKB"/>
</dbReference>
<dbReference type="GO" id="GO:0045944">
    <property type="term" value="P:positive regulation of transcription by RNA polymerase II"/>
    <property type="evidence" value="ECO:0000250"/>
    <property type="project" value="UniProtKB"/>
</dbReference>
<dbReference type="GO" id="GO:0032481">
    <property type="term" value="P:positive regulation of type I interferon production"/>
    <property type="evidence" value="ECO:0000250"/>
    <property type="project" value="UniProtKB"/>
</dbReference>
<dbReference type="GO" id="GO:2000564">
    <property type="term" value="P:regulation of CD8-positive, alpha-beta T cell proliferation"/>
    <property type="evidence" value="ECO:0000250"/>
    <property type="project" value="UniProtKB"/>
</dbReference>
<dbReference type="GO" id="GO:0051726">
    <property type="term" value="P:regulation of cell cycle"/>
    <property type="evidence" value="ECO:0000250"/>
    <property type="project" value="UniProtKB"/>
</dbReference>
<dbReference type="GO" id="GO:0034124">
    <property type="term" value="P:regulation of MyD88-dependent toll-like receptor signaling pathway"/>
    <property type="evidence" value="ECO:0000250"/>
    <property type="project" value="UniProtKB"/>
</dbReference>
<dbReference type="GO" id="GO:0006357">
    <property type="term" value="P:regulation of transcription by RNA polymerase II"/>
    <property type="evidence" value="ECO:0000318"/>
    <property type="project" value="GO_Central"/>
</dbReference>
<dbReference type="GO" id="GO:0060333">
    <property type="term" value="P:type II interferon-mediated signaling pathway"/>
    <property type="evidence" value="ECO:0000250"/>
    <property type="project" value="UniProtKB"/>
</dbReference>
<dbReference type="CDD" id="cd00103">
    <property type="entry name" value="IRF"/>
    <property type="match status" value="1"/>
</dbReference>
<dbReference type="FunFam" id="1.10.10.10:FF:000065">
    <property type="entry name" value="Interferon regulatory factor"/>
    <property type="match status" value="1"/>
</dbReference>
<dbReference type="Gene3D" id="1.10.10.10">
    <property type="entry name" value="Winged helix-like DNA-binding domain superfamily/Winged helix DNA-binding domain"/>
    <property type="match status" value="1"/>
</dbReference>
<dbReference type="InterPro" id="IPR019817">
    <property type="entry name" value="Interferon_reg_fac_CS"/>
</dbReference>
<dbReference type="InterPro" id="IPR001346">
    <property type="entry name" value="Interferon_reg_fact_DNA-bd_dom"/>
</dbReference>
<dbReference type="InterPro" id="IPR017431">
    <property type="entry name" value="IRF1/IRF2"/>
</dbReference>
<dbReference type="InterPro" id="IPR036388">
    <property type="entry name" value="WH-like_DNA-bd_sf"/>
</dbReference>
<dbReference type="InterPro" id="IPR036390">
    <property type="entry name" value="WH_DNA-bd_sf"/>
</dbReference>
<dbReference type="PANTHER" id="PTHR11949">
    <property type="entry name" value="INTERFERON REGULATORY FACTOR"/>
    <property type="match status" value="1"/>
</dbReference>
<dbReference type="PANTHER" id="PTHR11949:SF3">
    <property type="entry name" value="INTERFERON REGULATORY FACTOR 1"/>
    <property type="match status" value="1"/>
</dbReference>
<dbReference type="Pfam" id="PF00605">
    <property type="entry name" value="IRF"/>
    <property type="match status" value="1"/>
</dbReference>
<dbReference type="PIRSF" id="PIRSF038196">
    <property type="entry name" value="IFN_RF1/2"/>
    <property type="match status" value="1"/>
</dbReference>
<dbReference type="PRINTS" id="PR00267">
    <property type="entry name" value="INTFRNREGFCT"/>
</dbReference>
<dbReference type="SMART" id="SM00348">
    <property type="entry name" value="IRF"/>
    <property type="match status" value="1"/>
</dbReference>
<dbReference type="SUPFAM" id="SSF46785">
    <property type="entry name" value="Winged helix' DNA-binding domain"/>
    <property type="match status" value="1"/>
</dbReference>
<dbReference type="PROSITE" id="PS00601">
    <property type="entry name" value="IRF_1"/>
    <property type="match status" value="1"/>
</dbReference>
<dbReference type="PROSITE" id="PS51507">
    <property type="entry name" value="IRF_2"/>
    <property type="match status" value="1"/>
</dbReference>
<keyword id="KW-0007">Acetylation</keyword>
<keyword id="KW-0010">Activator</keyword>
<keyword id="KW-0051">Antiviral defense</keyword>
<keyword id="KW-0963">Cytoplasm</keyword>
<keyword id="KW-0238">DNA-binding</keyword>
<keyword id="KW-0391">Immunity</keyword>
<keyword id="KW-0399">Innate immunity</keyword>
<keyword id="KW-1017">Isopeptide bond</keyword>
<keyword id="KW-0539">Nucleus</keyword>
<keyword id="KW-0597">Phosphoprotein</keyword>
<keyword id="KW-1185">Reference proteome</keyword>
<keyword id="KW-0678">Repressor</keyword>
<keyword id="KW-0804">Transcription</keyword>
<keyword id="KW-0805">Transcription regulation</keyword>
<keyword id="KW-0043">Tumor suppressor</keyword>
<keyword id="KW-0832">Ubl conjugation</keyword>
<organism>
    <name type="scientific">Bos taurus</name>
    <name type="common">Bovine</name>
    <dbReference type="NCBI Taxonomy" id="9913"/>
    <lineage>
        <taxon>Eukaryota</taxon>
        <taxon>Metazoa</taxon>
        <taxon>Chordata</taxon>
        <taxon>Craniata</taxon>
        <taxon>Vertebrata</taxon>
        <taxon>Euteleostomi</taxon>
        <taxon>Mammalia</taxon>
        <taxon>Eutheria</taxon>
        <taxon>Laurasiatheria</taxon>
        <taxon>Artiodactyla</taxon>
        <taxon>Ruminantia</taxon>
        <taxon>Pecora</taxon>
        <taxon>Bovidae</taxon>
        <taxon>Bovinae</taxon>
        <taxon>Bos</taxon>
    </lineage>
</organism>
<reference key="1">
    <citation type="submission" date="2002-12" db="EMBL/GenBank/DDBJ databases">
        <title>Molecular cloning of Bos taurus interferon regulatory factor 1.</title>
        <authorList>
            <person name="Davis J.S."/>
            <person name="Hou X."/>
        </authorList>
    </citation>
    <scope>NUCLEOTIDE SEQUENCE [MRNA]</scope>
</reference>
<reference key="2">
    <citation type="submission" date="2005-08" db="EMBL/GenBank/DDBJ databases">
        <authorList>
            <consortium name="NIH - Mammalian Gene Collection (MGC) project"/>
        </authorList>
    </citation>
    <scope>NUCLEOTIDE SEQUENCE [LARGE SCALE MRNA]</scope>
    <source>
        <strain>Crossbred X Angus</strain>
        <tissue>Ileum</tissue>
    </source>
</reference>
<accession>Q3SZP0</accession>
<accession>Q865L0</accession>
<name>IRF1_BOVIN</name>
<protein>
    <recommendedName>
        <fullName>Interferon regulatory factor 1</fullName>
        <shortName>IRF-1</shortName>
    </recommendedName>
</protein>
<proteinExistence type="evidence at transcript level"/>
<evidence type="ECO:0000250" key="1"/>
<evidence type="ECO:0000250" key="2">
    <source>
        <dbReference type="UniProtKB" id="P10914"/>
    </source>
</evidence>
<evidence type="ECO:0000250" key="3">
    <source>
        <dbReference type="UniProtKB" id="P15314"/>
    </source>
</evidence>
<evidence type="ECO:0000255" key="4">
    <source>
        <dbReference type="PROSITE-ProRule" id="PRU00840"/>
    </source>
</evidence>
<evidence type="ECO:0000256" key="5">
    <source>
        <dbReference type="SAM" id="MobiDB-lite"/>
    </source>
</evidence>
<evidence type="ECO:0000305" key="6"/>
<gene>
    <name type="primary">IRF1</name>
</gene>
<sequence>MPITRMRMRPWLEMQINSNQIPGLIWINKEEMIFQIPWKHAAKHGWDINKDACLFRSWAIHTGRYKAGEKEPDPKTWKANFRCAMNSLPDIEEVKDQSRNKGSSAVRVYRMLPPLTKSQRKERKSKSSRDARSKAKKKPYGEYSPDTFSDGLSSSTLPDDHSNYTVRSYMGQDLDIERTLTPALSPCGVSSTLPNWSIPVEIVPDSTSDLYNFQVSPMPSTSEAATDEDEEGKLTEDIMKLLEQTGWQQTSVDGKGYLLNEPGAQPTSVYGEFSCKEEPEVDSPGGYIGLISSDMKNMDPSLLDSLLTPVRLPSIQAIPCAP</sequence>
<feature type="chain" id="PRO_0000223674" description="Interferon regulatory factor 1">
    <location>
        <begin position="1"/>
        <end position="322"/>
    </location>
</feature>
<feature type="DNA-binding region" description="IRF tryptophan pentad repeat" evidence="4">
    <location>
        <begin position="5"/>
        <end position="113"/>
    </location>
</feature>
<feature type="region of interest" description="Disordered" evidence="5">
    <location>
        <begin position="92"/>
        <end position="164"/>
    </location>
</feature>
<feature type="compositionally biased region" description="Polar residues" evidence="5">
    <location>
        <begin position="146"/>
        <end position="157"/>
    </location>
</feature>
<feature type="modified residue" description="N6-acetyllysine" evidence="2">
    <location>
        <position position="78"/>
    </location>
</feature>
<feature type="cross-link" description="Glycyl lysine isopeptide (Lys-Gly) (interchain with G-Cter in SUMO)" evidence="1">
    <location>
        <position position="276"/>
    </location>
</feature>
<feature type="cross-link" description="Glycyl lysine isopeptide (Lys-Gly) (interchain with G-Cter in SUMO)" evidence="1">
    <location>
        <position position="296"/>
    </location>
</feature>
<feature type="sequence conflict" description="In Ref. 1; AAO46998." evidence="6" ref="1">
    <original>L</original>
    <variation>W</variation>
    <location>
        <position position="302"/>
    </location>
</feature>
<comment type="function">
    <text evidence="2">Transcriptional regulator which displays a remarkable functional diversity in the regulation of cellular responses (By similarity). Regulates transcription of IFN and IFN-inducible genes, host response to viral and bacterial infections, regulation of many genes expressed during hematopoiesis, inflammation, immune responses and cell proliferation and differentiation, regulation of the cell cycle and induction of growth arrest and programmed cell death following DNA damage (By similarity). Stimulates both innate and acquired immune responses through the activation of specific target genes and can act as a transcriptional activator and repressor regulating target genes by binding to an interferon-stimulated response element (ISRE) in their promoters (By similarity). Has an essentail role in IFNG-dependent immunity to mycobacteria (By similarity). Binds to a consensus sequence in gene promoters (By similarity). Its target genes for transcriptional activation activity include: genes involved in anti-viral response, such as IFN-alpha/beta, RIGI, TNFSF10/TRAIL, ZBP1, OAS1/2, PIAS1/GBP, EIF2AK2/PKR and RSAD2/viperin; antibacterial response, such as GBP2, GBP5 and NOS2/INOS; anti-proliferative response, such as p53/TP53, LOX and CDKN1A; apoptosis, such as BBC3/PUMA, CASP1, CASP7 and CASP8; immune response, such as IL7, IL12A/B and IL15, PTGS2/COX2 and CYBB; DNA damage responses and DNA repair, such as POLQ/POLH; MHC class I expression, such as TAP1, PSMB9/LMP2, PSME1/PA28A, PSME2/PA28B and B2M and MHC class II expression, such as CIITA; metabolic enzymes, such as ACOD1/IRG1 (By similarity). Represses genes involved in anti-proliferative response, such as BIRC5/survivin, CCNB1, CCNE1, CDK1, CDK2 and CDK4 and in immune response, such as FOXP3, IL4, ANXA2 and TLR4 (By similarity). Stimulates p53/TP53-dependent transcription through enhanced recruitment of EP300 leading to increased acetylation of p53/TP53. Plays an important role in immune response directly affecting NK maturation and activity, macrophage production of IL12, Th1 development and maturation of CD8+ T-cells (By similarity). Also implicated in the differentiation and maturation of dendritic cells and in the suppression of regulatory T (Treg) cells development (By similarity). Acts as a tumor suppressor and plays a role not only in antagonism of tumor cell growth but also in stimulating an immune response against tumor cells (By similarity).</text>
</comment>
<comment type="activity regulation">
    <text evidence="3">Activated by MYD88.</text>
</comment>
<comment type="subunit">
    <text evidence="2 3">Monomer (By similarity). Homodimer (By similarity). Interacts with EP300 (By similarity). Interacts with MYD88 (By similarity). Interacts with PIAS3 (By similarity). Interacts with SPOP (By similarity).</text>
</comment>
<comment type="subcellular location">
    <subcellularLocation>
        <location evidence="3">Nucleus</location>
    </subcellularLocation>
    <subcellularLocation>
        <location evidence="3">Cytoplasm</location>
    </subcellularLocation>
    <text evidence="3">MYD88-associated IRF1 migrates into the nucleus more efficiently than non-MYD88-associated IRF1.</text>
</comment>
<comment type="PTM">
    <text evidence="2">Phosphorylated by CK2 and this positively regulates its activity.</text>
</comment>
<comment type="PTM">
    <text evidence="2 3">Sumoylation represses the transcriptional activity and displays enhanced resistance to protein degradation (By similarity). Sumoylated by UBE2I/UBC9 and SUMO1 (By similarity). Inactivates the tumor suppressor activity (By similarity). Elevated levels in tumor cells. Major site is Lys-276 (By similarity). Sumoylation is enhanced by PIAS3 (By similarity). Desumoylated by SENP1 in tumor cells and appears to compete with ubiquitination on C-terminal sites (By similarity).</text>
</comment>
<comment type="PTM">
    <text evidence="2">Ubiquitinated in a SPOP-depedent manner. Appears to compete with sumoylation on C-terminal sites (By similarity).</text>
</comment>
<comment type="similarity">
    <text evidence="4">Belongs to the IRF family.</text>
</comment>